<protein>
    <recommendedName>
        <fullName evidence="1">B-cell CLL/lymphoma 7 protein family member B-B</fullName>
    </recommendedName>
</protein>
<reference key="1">
    <citation type="journal article" date="2013" name="Nature">
        <title>The zebrafish reference genome sequence and its relationship to the human genome.</title>
        <authorList>
            <person name="Howe K."/>
            <person name="Clark M.D."/>
            <person name="Torroja C.F."/>
            <person name="Torrance J."/>
            <person name="Berthelot C."/>
            <person name="Muffato M."/>
            <person name="Collins J.E."/>
            <person name="Humphray S."/>
            <person name="McLaren K."/>
            <person name="Matthews L."/>
            <person name="McLaren S."/>
            <person name="Sealy I."/>
            <person name="Caccamo M."/>
            <person name="Churcher C."/>
            <person name="Scott C."/>
            <person name="Barrett J.C."/>
            <person name="Koch R."/>
            <person name="Rauch G.J."/>
            <person name="White S."/>
            <person name="Chow W."/>
            <person name="Kilian B."/>
            <person name="Quintais L.T."/>
            <person name="Guerra-Assuncao J.A."/>
            <person name="Zhou Y."/>
            <person name="Gu Y."/>
            <person name="Yen J."/>
            <person name="Vogel J.H."/>
            <person name="Eyre T."/>
            <person name="Redmond S."/>
            <person name="Banerjee R."/>
            <person name="Chi J."/>
            <person name="Fu B."/>
            <person name="Langley E."/>
            <person name="Maguire S.F."/>
            <person name="Laird G.K."/>
            <person name="Lloyd D."/>
            <person name="Kenyon E."/>
            <person name="Donaldson S."/>
            <person name="Sehra H."/>
            <person name="Almeida-King J."/>
            <person name="Loveland J."/>
            <person name="Trevanion S."/>
            <person name="Jones M."/>
            <person name="Quail M."/>
            <person name="Willey D."/>
            <person name="Hunt A."/>
            <person name="Burton J."/>
            <person name="Sims S."/>
            <person name="McLay K."/>
            <person name="Plumb B."/>
            <person name="Davis J."/>
            <person name="Clee C."/>
            <person name="Oliver K."/>
            <person name="Clark R."/>
            <person name="Riddle C."/>
            <person name="Elliot D."/>
            <person name="Threadgold G."/>
            <person name="Harden G."/>
            <person name="Ware D."/>
            <person name="Begum S."/>
            <person name="Mortimore B."/>
            <person name="Kerry G."/>
            <person name="Heath P."/>
            <person name="Phillimore B."/>
            <person name="Tracey A."/>
            <person name="Corby N."/>
            <person name="Dunn M."/>
            <person name="Johnson C."/>
            <person name="Wood J."/>
            <person name="Clark S."/>
            <person name="Pelan S."/>
            <person name="Griffiths G."/>
            <person name="Smith M."/>
            <person name="Glithero R."/>
            <person name="Howden P."/>
            <person name="Barker N."/>
            <person name="Lloyd C."/>
            <person name="Stevens C."/>
            <person name="Harley J."/>
            <person name="Holt K."/>
            <person name="Panagiotidis G."/>
            <person name="Lovell J."/>
            <person name="Beasley H."/>
            <person name="Henderson C."/>
            <person name="Gordon D."/>
            <person name="Auger K."/>
            <person name="Wright D."/>
            <person name="Collins J."/>
            <person name="Raisen C."/>
            <person name="Dyer L."/>
            <person name="Leung K."/>
            <person name="Robertson L."/>
            <person name="Ambridge K."/>
            <person name="Leongamornlert D."/>
            <person name="McGuire S."/>
            <person name="Gilderthorp R."/>
            <person name="Griffiths C."/>
            <person name="Manthravadi D."/>
            <person name="Nichol S."/>
            <person name="Barker G."/>
            <person name="Whitehead S."/>
            <person name="Kay M."/>
            <person name="Brown J."/>
            <person name="Murnane C."/>
            <person name="Gray E."/>
            <person name="Humphries M."/>
            <person name="Sycamore N."/>
            <person name="Barker D."/>
            <person name="Saunders D."/>
            <person name="Wallis J."/>
            <person name="Babbage A."/>
            <person name="Hammond S."/>
            <person name="Mashreghi-Mohammadi M."/>
            <person name="Barr L."/>
            <person name="Martin S."/>
            <person name="Wray P."/>
            <person name="Ellington A."/>
            <person name="Matthews N."/>
            <person name="Ellwood M."/>
            <person name="Woodmansey R."/>
            <person name="Clark G."/>
            <person name="Cooper J."/>
            <person name="Tromans A."/>
            <person name="Grafham D."/>
            <person name="Skuce C."/>
            <person name="Pandian R."/>
            <person name="Andrews R."/>
            <person name="Harrison E."/>
            <person name="Kimberley A."/>
            <person name="Garnett J."/>
            <person name="Fosker N."/>
            <person name="Hall R."/>
            <person name="Garner P."/>
            <person name="Kelly D."/>
            <person name="Bird C."/>
            <person name="Palmer S."/>
            <person name="Gehring I."/>
            <person name="Berger A."/>
            <person name="Dooley C.M."/>
            <person name="Ersan-Urun Z."/>
            <person name="Eser C."/>
            <person name="Geiger H."/>
            <person name="Geisler M."/>
            <person name="Karotki L."/>
            <person name="Kirn A."/>
            <person name="Konantz J."/>
            <person name="Konantz M."/>
            <person name="Oberlander M."/>
            <person name="Rudolph-Geiger S."/>
            <person name="Teucke M."/>
            <person name="Lanz C."/>
            <person name="Raddatz G."/>
            <person name="Osoegawa K."/>
            <person name="Zhu B."/>
            <person name="Rapp A."/>
            <person name="Widaa S."/>
            <person name="Langford C."/>
            <person name="Yang F."/>
            <person name="Schuster S.C."/>
            <person name="Carter N.P."/>
            <person name="Harrow J."/>
            <person name="Ning Z."/>
            <person name="Herrero J."/>
            <person name="Searle S.M."/>
            <person name="Enright A."/>
            <person name="Geisler R."/>
            <person name="Plasterk R.H."/>
            <person name="Lee C."/>
            <person name="Westerfield M."/>
            <person name="de Jong P.J."/>
            <person name="Zon L.I."/>
            <person name="Postlethwait J.H."/>
            <person name="Nusslein-Volhard C."/>
            <person name="Hubbard T.J."/>
            <person name="Roest Crollius H."/>
            <person name="Rogers J."/>
            <person name="Stemple D.L."/>
        </authorList>
    </citation>
    <scope>NUCLEOTIDE SEQUENCE [LARGE SCALE GENOMIC DNA]</scope>
    <source>
        <strain>Tuebingen</strain>
    </source>
</reference>
<reference evidence="6" key="2">
    <citation type="submission" date="2004-10" db="EMBL/GenBank/DDBJ databases">
        <authorList>
            <consortium name="NIH - Zebrafish Gene Collection (ZGC) project"/>
        </authorList>
    </citation>
    <scope>NUCLEOTIDE SEQUENCE [LARGE SCALE MRNA]</scope>
    <source>
        <tissue evidence="5">Ovary</tissue>
    </source>
</reference>
<sequence length="201" mass="22369">MSGRSVRAETRSRAKDDIKKVMAAIERVRRWEKKWVTVGDTSLRIFKWVPVTETKQIYKPKGAGPAVRELKGFPTDVVLENARSVLLDFQDDNSNQSFLSDAYQSNTKVDSSSNSSPQHVSEAVSPSHPPYYRTEDSQPPTLGQESMEAEREASTTSSEVTDEPPTLIKEDVLSLSTQEEEEAIGAPPLKRVCTEHNSTVS</sequence>
<feature type="chain" id="PRO_0000401108" description="B-cell CLL/lymphoma 7 protein family member B-B">
    <location>
        <begin position="1"/>
        <end position="201"/>
    </location>
</feature>
<feature type="region of interest" description="Disordered" evidence="3">
    <location>
        <begin position="104"/>
        <end position="201"/>
    </location>
</feature>
<feature type="sequence conflict" description="In Ref. 2; AAH83405." evidence="4" ref="2">
    <original>I</original>
    <variation>T</variation>
    <location>
        <position position="25"/>
    </location>
</feature>
<keyword id="KW-1185">Reference proteome</keyword>
<evidence type="ECO:0000250" key="1">
    <source>
        <dbReference type="UniProtKB" id="Q6NWJ0"/>
    </source>
</evidence>
<evidence type="ECO:0000255" key="2"/>
<evidence type="ECO:0000256" key="3">
    <source>
        <dbReference type="SAM" id="MobiDB-lite"/>
    </source>
</evidence>
<evidence type="ECO:0000305" key="4"/>
<evidence type="ECO:0000312" key="5">
    <source>
        <dbReference type="EMBL" id="AAH83405.1"/>
    </source>
</evidence>
<evidence type="ECO:0000312" key="6">
    <source>
        <dbReference type="EMBL" id="CAM13001.1"/>
    </source>
</evidence>
<evidence type="ECO:0000312" key="7">
    <source>
        <dbReference type="ZFIN" id="ZDB-GENE-010328-17"/>
    </source>
</evidence>
<organism>
    <name type="scientific">Danio rerio</name>
    <name type="common">Zebrafish</name>
    <name type="synonym">Brachydanio rerio</name>
    <dbReference type="NCBI Taxonomy" id="7955"/>
    <lineage>
        <taxon>Eukaryota</taxon>
        <taxon>Metazoa</taxon>
        <taxon>Chordata</taxon>
        <taxon>Craniata</taxon>
        <taxon>Vertebrata</taxon>
        <taxon>Euteleostomi</taxon>
        <taxon>Actinopterygii</taxon>
        <taxon>Neopterygii</taxon>
        <taxon>Teleostei</taxon>
        <taxon>Ostariophysi</taxon>
        <taxon>Cypriniformes</taxon>
        <taxon>Danionidae</taxon>
        <taxon>Danioninae</taxon>
        <taxon>Danio</taxon>
    </lineage>
</organism>
<accession>A2BIL8</accession>
<accession>Q5XJ99</accession>
<proteinExistence type="evidence at transcript level"/>
<name>BC7BB_DANRE</name>
<comment type="similarity">
    <text evidence="2">Belongs to the BCL7 family.</text>
</comment>
<gene>
    <name evidence="7" type="primary">bcl7bb</name>
    <name evidence="7" type="synonym">bcl7b</name>
    <name type="ORF">si:ch211-203b8.2-001</name>
</gene>
<dbReference type="EMBL" id="BX950182">
    <property type="protein sequence ID" value="CAM13001.1"/>
    <property type="molecule type" value="Genomic_DNA"/>
</dbReference>
<dbReference type="EMBL" id="BC083405">
    <property type="protein sequence ID" value="AAH83405.1"/>
    <property type="molecule type" value="mRNA"/>
</dbReference>
<dbReference type="RefSeq" id="NP_001006018.1">
    <property type="nucleotide sequence ID" value="NM_001006018.1"/>
</dbReference>
<dbReference type="FunCoup" id="A2BIL8">
    <property type="interactions" value="183"/>
</dbReference>
<dbReference type="STRING" id="7955.ENSDARP00000059134"/>
<dbReference type="PaxDb" id="7955-ENSDARP00000059134"/>
<dbReference type="DNASU" id="81595"/>
<dbReference type="Ensembl" id="ENSDART00000059135">
    <property type="protein sequence ID" value="ENSDARP00000059134"/>
    <property type="gene ID" value="ENSDARG00000040396"/>
</dbReference>
<dbReference type="Ensembl" id="ENSDART00000179676">
    <property type="protein sequence ID" value="ENSDARP00000146742"/>
    <property type="gene ID" value="ENSDARG00000116093"/>
</dbReference>
<dbReference type="GeneID" id="81595"/>
<dbReference type="KEGG" id="dre:81595"/>
<dbReference type="AGR" id="ZFIN:ZDB-GENE-010328-17"/>
<dbReference type="CTD" id="81595"/>
<dbReference type="ZFIN" id="ZDB-GENE-010328-17">
    <property type="gene designation" value="bcl7bb"/>
</dbReference>
<dbReference type="eggNOG" id="KOG4095">
    <property type="taxonomic scope" value="Eukaryota"/>
</dbReference>
<dbReference type="HOGENOM" id="CLU_110835_1_0_1"/>
<dbReference type="InParanoid" id="A2BIL8"/>
<dbReference type="OMA" id="HVSPPHT"/>
<dbReference type="OrthoDB" id="5989898at2759"/>
<dbReference type="PhylomeDB" id="A2BIL8"/>
<dbReference type="TreeFam" id="TF317441"/>
<dbReference type="PRO" id="PR:A2BIL8"/>
<dbReference type="Proteomes" id="UP000000437">
    <property type="component" value="Alternate scaffold 18"/>
</dbReference>
<dbReference type="Proteomes" id="UP000000437">
    <property type="component" value="Chromosome 18"/>
</dbReference>
<dbReference type="Bgee" id="ENSDARG00000040396">
    <property type="expression patterns" value="Expressed in swim bladder and 20 other cell types or tissues"/>
</dbReference>
<dbReference type="InterPro" id="IPR006804">
    <property type="entry name" value="BCL7"/>
</dbReference>
<dbReference type="PANTHER" id="PTHR12767:SF5">
    <property type="entry name" value="B-CELL CLL_LYMPHOMA 7 PROTEIN FAMILY MEMBER B"/>
    <property type="match status" value="1"/>
</dbReference>
<dbReference type="PANTHER" id="PTHR12767">
    <property type="entry name" value="BCL7 RELATED"/>
    <property type="match status" value="1"/>
</dbReference>
<dbReference type="Pfam" id="PF04714">
    <property type="entry name" value="BCL_N"/>
    <property type="match status" value="1"/>
</dbReference>